<evidence type="ECO:0000250" key="1"/>
<evidence type="ECO:0000255" key="2">
    <source>
        <dbReference type="PROSITE-ProRule" id="PRU10067"/>
    </source>
</evidence>
<evidence type="ECO:0000305" key="3"/>
<feature type="chain" id="PRO_0000169877" description="Sucrose-6-phosphate hydrolase">
    <location>
        <begin position="1"/>
        <end position="466"/>
    </location>
</feature>
<feature type="active site" evidence="2">
    <location>
        <position position="41"/>
    </location>
</feature>
<feature type="binding site" evidence="1">
    <location>
        <begin position="38"/>
        <end position="41"/>
    </location>
    <ligand>
        <name>substrate</name>
    </ligand>
</feature>
<feature type="binding site" evidence="1">
    <location>
        <position position="57"/>
    </location>
    <ligand>
        <name>substrate</name>
    </ligand>
</feature>
<feature type="binding site" evidence="1">
    <location>
        <begin position="100"/>
        <end position="101"/>
    </location>
    <ligand>
        <name>substrate</name>
    </ligand>
</feature>
<feature type="binding site" evidence="1">
    <location>
        <begin position="159"/>
        <end position="160"/>
    </location>
    <ligand>
        <name>substrate</name>
    </ligand>
</feature>
<feature type="binding site" evidence="1">
    <location>
        <position position="218"/>
    </location>
    <ligand>
        <name>substrate</name>
    </ligand>
</feature>
<protein>
    <recommendedName>
        <fullName>Sucrose-6-phosphate hydrolase</fullName>
        <shortName>Sucrase</shortName>
        <ecNumber>3.2.1.26</ecNumber>
    </recommendedName>
    <alternativeName>
        <fullName>Invertase</fullName>
    </alternativeName>
</protein>
<organism>
    <name type="scientific">Salmonella typhimurium</name>
    <dbReference type="NCBI Taxonomy" id="90371"/>
    <lineage>
        <taxon>Bacteria</taxon>
        <taxon>Pseudomonadati</taxon>
        <taxon>Pseudomonadota</taxon>
        <taxon>Gammaproteobacteria</taxon>
        <taxon>Enterobacterales</taxon>
        <taxon>Enterobacteriaceae</taxon>
        <taxon>Salmonella</taxon>
    </lineage>
</organism>
<gene>
    <name type="primary">scrB</name>
</gene>
<name>SCRB_SALTM</name>
<proteinExistence type="inferred from homology"/>
<comment type="function">
    <text>Enables the bacterium to metabolize sucrose as a sole carbon source.</text>
</comment>
<comment type="catalytic activity">
    <reaction evidence="2">
        <text>Hydrolysis of terminal non-reducing beta-D-fructofuranoside residues in beta-D-fructofuranosides.</text>
        <dbReference type="EC" id="3.2.1.26"/>
    </reaction>
</comment>
<comment type="pathway">
    <text>Glycan biosynthesis; sucrose metabolism.</text>
</comment>
<comment type="subcellular location">
    <subcellularLocation>
        <location>Cytoplasm</location>
    </subcellularLocation>
</comment>
<comment type="similarity">
    <text evidence="3">Belongs to the glycosyl hydrolase 32 family.</text>
</comment>
<dbReference type="EC" id="3.2.1.26"/>
<dbReference type="EMBL" id="X67750">
    <property type="protein sequence ID" value="CAA47974.1"/>
    <property type="molecule type" value="Genomic_DNA"/>
</dbReference>
<dbReference type="PIR" id="S62330">
    <property type="entry name" value="S62330"/>
</dbReference>
<dbReference type="SMR" id="P37075"/>
<dbReference type="CAZy" id="GH32">
    <property type="family name" value="Glycoside Hydrolase Family 32"/>
</dbReference>
<dbReference type="UniPathway" id="UPA00238"/>
<dbReference type="GO" id="GO:0005737">
    <property type="term" value="C:cytoplasm"/>
    <property type="evidence" value="ECO:0007669"/>
    <property type="project" value="UniProtKB-SubCell"/>
</dbReference>
<dbReference type="GO" id="GO:0004564">
    <property type="term" value="F:beta-fructofuranosidase activity"/>
    <property type="evidence" value="ECO:0007669"/>
    <property type="project" value="UniProtKB-EC"/>
</dbReference>
<dbReference type="GO" id="GO:0005985">
    <property type="term" value="P:sucrose metabolic process"/>
    <property type="evidence" value="ECO:0007669"/>
    <property type="project" value="UniProtKB-UniPathway"/>
</dbReference>
<dbReference type="CDD" id="cd18623">
    <property type="entry name" value="GH32_ScrB-like"/>
    <property type="match status" value="1"/>
</dbReference>
<dbReference type="Gene3D" id="2.60.120.560">
    <property type="entry name" value="Exo-inulinase, domain 1"/>
    <property type="match status" value="1"/>
</dbReference>
<dbReference type="Gene3D" id="2.115.10.20">
    <property type="entry name" value="Glycosyl hydrolase domain, family 43"/>
    <property type="match status" value="1"/>
</dbReference>
<dbReference type="InterPro" id="IPR013320">
    <property type="entry name" value="ConA-like_dom_sf"/>
</dbReference>
<dbReference type="InterPro" id="IPR051214">
    <property type="entry name" value="GH32_Enzymes"/>
</dbReference>
<dbReference type="InterPro" id="IPR001362">
    <property type="entry name" value="Glyco_hydro_32"/>
</dbReference>
<dbReference type="InterPro" id="IPR018053">
    <property type="entry name" value="Glyco_hydro_32_AS"/>
</dbReference>
<dbReference type="InterPro" id="IPR013189">
    <property type="entry name" value="Glyco_hydro_32_C"/>
</dbReference>
<dbReference type="InterPro" id="IPR013148">
    <property type="entry name" value="Glyco_hydro_32_N"/>
</dbReference>
<dbReference type="InterPro" id="IPR023296">
    <property type="entry name" value="Glyco_hydro_beta-prop_sf"/>
</dbReference>
<dbReference type="InterPro" id="IPR006232">
    <property type="entry name" value="Suc6P_hydrolase"/>
</dbReference>
<dbReference type="NCBIfam" id="TIGR01322">
    <property type="entry name" value="scrB_fam"/>
    <property type="match status" value="1"/>
</dbReference>
<dbReference type="PANTHER" id="PTHR43101">
    <property type="entry name" value="BETA-FRUCTOSIDASE"/>
    <property type="match status" value="1"/>
</dbReference>
<dbReference type="PANTHER" id="PTHR43101:SF1">
    <property type="entry name" value="BETA-FRUCTOSIDASE"/>
    <property type="match status" value="1"/>
</dbReference>
<dbReference type="Pfam" id="PF08244">
    <property type="entry name" value="Glyco_hydro_32C"/>
    <property type="match status" value="1"/>
</dbReference>
<dbReference type="Pfam" id="PF00251">
    <property type="entry name" value="Glyco_hydro_32N"/>
    <property type="match status" value="1"/>
</dbReference>
<dbReference type="SMART" id="SM00640">
    <property type="entry name" value="Glyco_32"/>
    <property type="match status" value="1"/>
</dbReference>
<dbReference type="SUPFAM" id="SSF75005">
    <property type="entry name" value="Arabinanase/levansucrase/invertase"/>
    <property type="match status" value="1"/>
</dbReference>
<dbReference type="SUPFAM" id="SSF49899">
    <property type="entry name" value="Concanavalin A-like lectins/glucanases"/>
    <property type="match status" value="1"/>
</dbReference>
<dbReference type="PROSITE" id="PS00609">
    <property type="entry name" value="GLYCOSYL_HYDROL_F32"/>
    <property type="match status" value="1"/>
</dbReference>
<sequence length="466" mass="52589">MSLPSRLPAILQAVMQGQPRALADSHYPRWHHAPVTGLMNDPNGFIEFAGRYHLFYQWNPLACDHTFKCWAHWSSIDLLHWQHEPIALMPDEEYDRNGCYSGSAVDNNGTLTLCYTGNVKFAEGGRTAWQCLATENADGTFRKIGPVLPLPEGYTGHVRDPKVWRHEDLWYMVLGAQDRQKRGKVLLFSSADLHQWTSMGEIAGHGINGLDDVGYMWECPDLFPLGDQHILICCPQGIAREEECYLNTYPAVWMAGEFDYAAGAFRHGELHELDAGFEFYAPQTMLTSDGRRLLVGWMGVPEGEEMLQPTLNNGWIHQMTCLRELEFINGQLYQRPLRELSALRGEANGWSGNALPLAPMEIDLQTRGGDMLSLDFGGVLTLECDASGLRLARRSLASDEMHYRYWRGNVRSLRVFIDQSSVEIFINGGEGVMSSRYFPACSGQLTFSGITPDAFCYWPLRTCMVE</sequence>
<accession>P37075</accession>
<geneLocation type="plasmid">
    <name>pUR400</name>
</geneLocation>
<keyword id="KW-0119">Carbohydrate metabolism</keyword>
<keyword id="KW-0963">Cytoplasm</keyword>
<keyword id="KW-0326">Glycosidase</keyword>
<keyword id="KW-0378">Hydrolase</keyword>
<keyword id="KW-0614">Plasmid</keyword>
<reference key="1">
    <citation type="journal article" date="1993" name="Mol. Microbiol.">
        <title>Molecular analysis of two ScrR repressors and of a ScrR-FruR hybrid repressor for sucrose and D-fructose specific regulons from enteric bacteria.</title>
        <authorList>
            <person name="Jahreis K."/>
            <person name="Lengeler J.W."/>
        </authorList>
    </citation>
    <scope>NUCLEOTIDE SEQUENCE [GENOMIC DNA]</scope>
</reference>
<reference key="2">
    <citation type="journal article" date="1996" name="Mol. Gen. Genet.">
        <title>Molecular analysis of the scrA and scrB genes from Klebsiella pneumoniae and plasmid pUR400, which encode the sucrose transport protein Enzyme II Scr of the phosphotransferase system and a sucrose-6-phosphate invertase.</title>
        <authorList>
            <person name="Titgemeyer F."/>
            <person name="Jahreis K."/>
            <person name="Ebner R."/>
            <person name="Lengeler J.W."/>
        </authorList>
    </citation>
    <scope>SEQUENCE REVISION</scope>
</reference>